<reference key="1">
    <citation type="submission" date="2000-05" db="EMBL/GenBank/DDBJ databases">
        <title>Cloning and characterization of Salmonella typhimurium MscL.</title>
        <authorList>
            <person name="Jones S.E."/>
            <person name="Naik R.R."/>
            <person name="Stone M.O."/>
        </authorList>
    </citation>
    <scope>NUCLEOTIDE SEQUENCE [GENOMIC DNA]</scope>
</reference>
<reference key="2">
    <citation type="journal article" date="2001" name="Nature">
        <title>Complete genome sequence of Salmonella enterica serovar Typhimurium LT2.</title>
        <authorList>
            <person name="McClelland M."/>
            <person name="Sanderson K.E."/>
            <person name="Spieth J."/>
            <person name="Clifton S.W."/>
            <person name="Latreille P."/>
            <person name="Courtney L."/>
            <person name="Porwollik S."/>
            <person name="Ali J."/>
            <person name="Dante M."/>
            <person name="Du F."/>
            <person name="Hou S."/>
            <person name="Layman D."/>
            <person name="Leonard S."/>
            <person name="Nguyen C."/>
            <person name="Scott K."/>
            <person name="Holmes A."/>
            <person name="Grewal N."/>
            <person name="Mulvaney E."/>
            <person name="Ryan E."/>
            <person name="Sun H."/>
            <person name="Florea L."/>
            <person name="Miller W."/>
            <person name="Stoneking T."/>
            <person name="Nhan M."/>
            <person name="Waterston R."/>
            <person name="Wilson R.K."/>
        </authorList>
    </citation>
    <scope>NUCLEOTIDE SEQUENCE [LARGE SCALE GENOMIC DNA]</scope>
    <source>
        <strain>LT2 / SGSC1412 / ATCC 700720</strain>
    </source>
</reference>
<reference key="3">
    <citation type="journal article" date="1994" name="EMBO J.">
        <title>A Salmonella protein that is required for resistance to antimicrobial peptides and transport of potassium.</title>
        <authorList>
            <person name="Parra-Lopez C."/>
            <person name="Lin R."/>
            <person name="Aspedon A."/>
            <person name="Groisman E.A."/>
        </authorList>
    </citation>
    <scope>NUCLEOTIDE SEQUENCE [GENOMIC DNA] OF 1-7</scope>
</reference>
<keyword id="KW-0997">Cell inner membrane</keyword>
<keyword id="KW-1003">Cell membrane</keyword>
<keyword id="KW-0407">Ion channel</keyword>
<keyword id="KW-0406">Ion transport</keyword>
<keyword id="KW-0472">Membrane</keyword>
<keyword id="KW-1185">Reference proteome</keyword>
<keyword id="KW-0812">Transmembrane</keyword>
<keyword id="KW-1133">Transmembrane helix</keyword>
<keyword id="KW-0813">Transport</keyword>
<sequence>MSFIKEFREFAMRGNVVDLAVGVIIGAAFGKIVSSLVADIIMPPLGLLIGGIDFKQFAFTLREAQGDIPAVVMHYGVFIQNVFDFVIVAFAIFVAIKLINRLNRKKAEEPAAPPAPSKEEVLLGEIRDLLKEQNNRS</sequence>
<protein>
    <recommendedName>
        <fullName evidence="1">Large-conductance mechanosensitive channel</fullName>
    </recommendedName>
</protein>
<dbReference type="EMBL" id="AF272843">
    <property type="protein sequence ID" value="AAF78240.1"/>
    <property type="molecule type" value="Genomic_DNA"/>
</dbReference>
<dbReference type="EMBL" id="AE006468">
    <property type="protein sequence ID" value="AAL22273.1"/>
    <property type="molecule type" value="Genomic_DNA"/>
</dbReference>
<dbReference type="EMBL" id="X80501">
    <property type="protein sequence ID" value="CAA56664.1"/>
    <property type="molecule type" value="Genomic_DNA"/>
</dbReference>
<dbReference type="RefSeq" id="NP_462314.1">
    <property type="nucleotide sequence ID" value="NC_003197.2"/>
</dbReference>
<dbReference type="RefSeq" id="WP_000008119.1">
    <property type="nucleotide sequence ID" value="NC_003197.2"/>
</dbReference>
<dbReference type="SMR" id="P0A1X8"/>
<dbReference type="STRING" id="99287.STM3410"/>
<dbReference type="PaxDb" id="99287-STM3410"/>
<dbReference type="GeneID" id="1254933"/>
<dbReference type="KEGG" id="stm:STM3410"/>
<dbReference type="PATRIC" id="fig|99287.12.peg.3608"/>
<dbReference type="HOGENOM" id="CLU_095787_0_0_6"/>
<dbReference type="OMA" id="FKTFAMR"/>
<dbReference type="PhylomeDB" id="P0A1X8"/>
<dbReference type="BioCyc" id="SENT99287:STM3410-MONOMER"/>
<dbReference type="Proteomes" id="UP000001014">
    <property type="component" value="Chromosome"/>
</dbReference>
<dbReference type="GO" id="GO:0016020">
    <property type="term" value="C:membrane"/>
    <property type="evidence" value="ECO:0000318"/>
    <property type="project" value="GO_Central"/>
</dbReference>
<dbReference type="GO" id="GO:0005886">
    <property type="term" value="C:plasma membrane"/>
    <property type="evidence" value="ECO:0007669"/>
    <property type="project" value="UniProtKB-SubCell"/>
</dbReference>
<dbReference type="GO" id="GO:0008381">
    <property type="term" value="F:mechanosensitive monoatomic ion channel activity"/>
    <property type="evidence" value="ECO:0000318"/>
    <property type="project" value="GO_Central"/>
</dbReference>
<dbReference type="GO" id="GO:0006811">
    <property type="term" value="P:monoatomic ion transport"/>
    <property type="evidence" value="ECO:0000318"/>
    <property type="project" value="GO_Central"/>
</dbReference>
<dbReference type="FunFam" id="1.10.1200.120:FF:000001">
    <property type="entry name" value="Large-conductance mechanosensitive channel"/>
    <property type="match status" value="1"/>
</dbReference>
<dbReference type="Gene3D" id="1.10.1200.120">
    <property type="entry name" value="Large-conductance mechanosensitive channel, MscL, domain 1"/>
    <property type="match status" value="1"/>
</dbReference>
<dbReference type="HAMAP" id="MF_00115">
    <property type="entry name" value="MscL"/>
    <property type="match status" value="1"/>
</dbReference>
<dbReference type="InterPro" id="IPR019823">
    <property type="entry name" value="Mechanosensitive_channel_CS"/>
</dbReference>
<dbReference type="InterPro" id="IPR001185">
    <property type="entry name" value="MS_channel"/>
</dbReference>
<dbReference type="InterPro" id="IPR037673">
    <property type="entry name" value="MSC/AndL"/>
</dbReference>
<dbReference type="InterPro" id="IPR036019">
    <property type="entry name" value="MscL_channel"/>
</dbReference>
<dbReference type="NCBIfam" id="TIGR00220">
    <property type="entry name" value="mscL"/>
    <property type="match status" value="1"/>
</dbReference>
<dbReference type="NCBIfam" id="NF001841">
    <property type="entry name" value="PRK00567.1-1"/>
    <property type="match status" value="1"/>
</dbReference>
<dbReference type="NCBIfam" id="NF001843">
    <property type="entry name" value="PRK00567.1-4"/>
    <property type="match status" value="1"/>
</dbReference>
<dbReference type="PANTHER" id="PTHR30266:SF2">
    <property type="entry name" value="LARGE-CONDUCTANCE MECHANOSENSITIVE CHANNEL"/>
    <property type="match status" value="1"/>
</dbReference>
<dbReference type="PANTHER" id="PTHR30266">
    <property type="entry name" value="MECHANOSENSITIVE CHANNEL MSCL"/>
    <property type="match status" value="1"/>
</dbReference>
<dbReference type="Pfam" id="PF01741">
    <property type="entry name" value="MscL"/>
    <property type="match status" value="1"/>
</dbReference>
<dbReference type="PRINTS" id="PR01264">
    <property type="entry name" value="MECHCHANNEL"/>
</dbReference>
<dbReference type="SUPFAM" id="SSF81330">
    <property type="entry name" value="Gated mechanosensitive channel"/>
    <property type="match status" value="1"/>
</dbReference>
<dbReference type="PROSITE" id="PS01327">
    <property type="entry name" value="MSCL"/>
    <property type="match status" value="1"/>
</dbReference>
<evidence type="ECO:0000255" key="1">
    <source>
        <dbReference type="HAMAP-Rule" id="MF_00115"/>
    </source>
</evidence>
<evidence type="ECO:0000305" key="2"/>
<proteinExistence type="inferred from homology"/>
<name>MSCL_SALTY</name>
<comment type="function">
    <text evidence="1">Channel that opens in response to stretch forces in the membrane lipid bilayer. May participate in the regulation of osmotic pressure changes within the cell.</text>
</comment>
<comment type="subunit">
    <text evidence="1">Homopentamer.</text>
</comment>
<comment type="subcellular location">
    <subcellularLocation>
        <location evidence="1">Cell inner membrane</location>
        <topology evidence="1">Multi-pass membrane protein</topology>
    </subcellularLocation>
</comment>
<comment type="similarity">
    <text evidence="1 2">Belongs to the MscL family.</text>
</comment>
<feature type="chain" id="PRO_0000192459" description="Large-conductance mechanosensitive channel">
    <location>
        <begin position="1"/>
        <end position="137"/>
    </location>
</feature>
<feature type="transmembrane region" description="Helical" evidence="1">
    <location>
        <begin position="10"/>
        <end position="30"/>
    </location>
</feature>
<feature type="transmembrane region" description="Helical" evidence="1">
    <location>
        <begin position="76"/>
        <end position="96"/>
    </location>
</feature>
<feature type="sequence conflict" description="In Ref. 1; AAF78240." evidence="2" ref="1">
    <original>F</original>
    <variation>V</variation>
    <location>
        <position position="59"/>
    </location>
</feature>
<feature type="sequence conflict" description="In Ref. 1; AAF78240." evidence="2" ref="1">
    <original>E</original>
    <variation>D</variation>
    <location>
        <position position="63"/>
    </location>
</feature>
<feature type="sequence conflict" description="In Ref. 1; AAF78240." evidence="2" ref="1">
    <original>V</original>
    <variation>L</variation>
    <location>
        <position position="86"/>
    </location>
</feature>
<feature type="sequence conflict" description="In Ref. 1; AAF78240." evidence="2" ref="1">
    <original>V</original>
    <variation>M</variation>
    <location>
        <position position="94"/>
    </location>
</feature>
<feature type="sequence conflict" description="In Ref. 1; AAF78240." evidence="2" ref="1">
    <original>R</original>
    <variation>K</variation>
    <location>
        <position position="101"/>
    </location>
</feature>
<feature type="sequence conflict" description="In Ref. 1; AAF78240." evidence="2" ref="1">
    <location>
        <position position="107"/>
    </location>
</feature>
<feature type="sequence conflict" description="In Ref. 1; AAF78240." evidence="2" ref="1">
    <original>P</original>
    <variation>V</variation>
    <location>
        <position position="113"/>
    </location>
</feature>
<feature type="sequence conflict" description="In Ref. 1; AAF78240." evidence="2" ref="1">
    <original>G</original>
    <variation>T</variation>
    <location>
        <position position="124"/>
    </location>
</feature>
<feature type="sequence conflict" description="In Ref. 1; AAF78240." evidence="2" ref="1">
    <original>S</original>
    <variation>P</variation>
    <location>
        <position position="137"/>
    </location>
</feature>
<organism>
    <name type="scientific">Salmonella typhimurium (strain LT2 / SGSC1412 / ATCC 700720)</name>
    <dbReference type="NCBI Taxonomy" id="99287"/>
    <lineage>
        <taxon>Bacteria</taxon>
        <taxon>Pseudomonadati</taxon>
        <taxon>Pseudomonadota</taxon>
        <taxon>Gammaproteobacteria</taxon>
        <taxon>Enterobacterales</taxon>
        <taxon>Enterobacteriaceae</taxon>
        <taxon>Salmonella</taxon>
    </lineage>
</organism>
<accession>P0A1X8</accession>
<accession>P39446</accession>
<accession>Q9KH32</accession>
<gene>
    <name evidence="1" type="primary">mscL</name>
    <name type="ordered locus">STM3410</name>
</gene>